<accession>Q82SD8</accession>
<protein>
    <recommendedName>
        <fullName>Chaperone protein ClpB</fullName>
    </recommendedName>
</protein>
<organism>
    <name type="scientific">Nitrosomonas europaea (strain ATCC 19718 / CIP 103999 / KCTC 2705 / NBRC 14298)</name>
    <dbReference type="NCBI Taxonomy" id="228410"/>
    <lineage>
        <taxon>Bacteria</taxon>
        <taxon>Pseudomonadati</taxon>
        <taxon>Pseudomonadota</taxon>
        <taxon>Betaproteobacteria</taxon>
        <taxon>Nitrosomonadales</taxon>
        <taxon>Nitrosomonadaceae</taxon>
        <taxon>Nitrosomonas</taxon>
    </lineage>
</organism>
<reference key="1">
    <citation type="journal article" date="2003" name="J. Bacteriol.">
        <title>Complete genome sequence of the ammonia-oxidizing bacterium and obligate chemolithoautotroph Nitrosomonas europaea.</title>
        <authorList>
            <person name="Chain P."/>
            <person name="Lamerdin J.E."/>
            <person name="Larimer F.W."/>
            <person name="Regala W."/>
            <person name="Lao V."/>
            <person name="Land M.L."/>
            <person name="Hauser L."/>
            <person name="Hooper A.B."/>
            <person name="Klotz M.G."/>
            <person name="Norton J."/>
            <person name="Sayavedra-Soto L.A."/>
            <person name="Arciero D.M."/>
            <person name="Hommes N.G."/>
            <person name="Whittaker M.M."/>
            <person name="Arp D.J."/>
        </authorList>
    </citation>
    <scope>NUCLEOTIDE SEQUENCE [LARGE SCALE GENOMIC DNA]</scope>
    <source>
        <strain>ATCC 19718 / CIP 103999 / KCTC 2705 / NBRC 14298</strain>
    </source>
</reference>
<feature type="chain" id="PRO_0000191149" description="Chaperone protein ClpB">
    <location>
        <begin position="1"/>
        <end position="863"/>
    </location>
</feature>
<feature type="domain" description="Clp R" evidence="2">
    <location>
        <begin position="3"/>
        <end position="146"/>
    </location>
</feature>
<feature type="region of interest" description="Repeat 1" evidence="2">
    <location>
        <begin position="6"/>
        <end position="71"/>
    </location>
</feature>
<feature type="region of interest" description="Repeat 2" evidence="2">
    <location>
        <begin position="83"/>
        <end position="146"/>
    </location>
</feature>
<feature type="region of interest" description="NBD1" evidence="1">
    <location>
        <begin position="159"/>
        <end position="340"/>
    </location>
</feature>
<feature type="region of interest" description="Linker" evidence="1">
    <location>
        <begin position="341"/>
        <end position="550"/>
    </location>
</feature>
<feature type="region of interest" description="Disordered" evidence="3">
    <location>
        <begin position="467"/>
        <end position="490"/>
    </location>
</feature>
<feature type="region of interest" description="NBD2" evidence="1">
    <location>
        <begin position="560"/>
        <end position="769"/>
    </location>
</feature>
<feature type="region of interest" description="C-terminal" evidence="1">
    <location>
        <begin position="770"/>
        <end position="863"/>
    </location>
</feature>
<feature type="coiled-coil region" evidence="1">
    <location>
        <begin position="391"/>
        <end position="525"/>
    </location>
</feature>
<feature type="binding site" evidence="1">
    <location>
        <begin position="206"/>
        <end position="213"/>
    </location>
    <ligand>
        <name>ATP</name>
        <dbReference type="ChEBI" id="CHEBI:30616"/>
        <label>1</label>
    </ligand>
</feature>
<feature type="binding site" evidence="1">
    <location>
        <begin position="610"/>
        <end position="617"/>
    </location>
    <ligand>
        <name>ATP</name>
        <dbReference type="ChEBI" id="CHEBI:30616"/>
        <label>2</label>
    </ligand>
</feature>
<comment type="function">
    <text evidence="1">Part of a stress-induced multi-chaperone system, it is involved in the recovery of the cell from heat-induced damage, in cooperation with DnaK, DnaJ and GrpE. Acts before DnaK, in the processing of protein aggregates. Protein binding stimulates the ATPase activity; ATP hydrolysis unfolds the denatured protein aggregates, which probably helps expose new hydrophobic binding sites on the surface of ClpB-bound aggregates, contributing to the solubilization and refolding of denatured protein aggregates by DnaK (By similarity).</text>
</comment>
<comment type="subunit">
    <text evidence="1">Homohexamer. The oligomerization is ATP-dependent (By similarity).</text>
</comment>
<comment type="subcellular location">
    <subcellularLocation>
        <location evidence="4">Cytoplasm</location>
    </subcellularLocation>
</comment>
<comment type="domain">
    <text evidence="1">The Clp repeat (R) domain probably functions as a substrate-discriminating domain, recruiting aggregated proteins to the ClpB hexamer and/or stabilizing bound proteins. The NBD2 domain is responsible for oligomerization, whereas the NBD1 domain stabilizes the hexamer probably in an ATP-dependent manner. The movement of the coiled-coil domain is essential for ClpB ability to rescue proteins from an aggregated state, probably by pulling apart large aggregated proteins, which are bound between the coiled-coils motifs of adjacent ClpB subunits in the functional hexamer (By similarity).</text>
</comment>
<comment type="similarity">
    <text evidence="4">Belongs to the ClpA/ClpB family.</text>
</comment>
<proteinExistence type="inferred from homology"/>
<gene>
    <name type="primary">clpB</name>
    <name type="ordered locus">NE2402</name>
</gene>
<evidence type="ECO:0000250" key="1"/>
<evidence type="ECO:0000255" key="2">
    <source>
        <dbReference type="PROSITE-ProRule" id="PRU01251"/>
    </source>
</evidence>
<evidence type="ECO:0000256" key="3">
    <source>
        <dbReference type="SAM" id="MobiDB-lite"/>
    </source>
</evidence>
<evidence type="ECO:0000305" key="4"/>
<dbReference type="EMBL" id="AL954747">
    <property type="protein sequence ID" value="CAD86314.1"/>
    <property type="molecule type" value="Genomic_DNA"/>
</dbReference>
<dbReference type="RefSeq" id="WP_011112875.1">
    <property type="nucleotide sequence ID" value="NC_004757.1"/>
</dbReference>
<dbReference type="SMR" id="Q82SD8"/>
<dbReference type="STRING" id="228410.NE2402"/>
<dbReference type="GeneID" id="87105533"/>
<dbReference type="KEGG" id="neu:NE2402"/>
<dbReference type="eggNOG" id="COG0542">
    <property type="taxonomic scope" value="Bacteria"/>
</dbReference>
<dbReference type="HOGENOM" id="CLU_005070_4_0_4"/>
<dbReference type="OrthoDB" id="9803641at2"/>
<dbReference type="PhylomeDB" id="Q82SD8"/>
<dbReference type="Proteomes" id="UP000001416">
    <property type="component" value="Chromosome"/>
</dbReference>
<dbReference type="GO" id="GO:0005737">
    <property type="term" value="C:cytoplasm"/>
    <property type="evidence" value="ECO:0007669"/>
    <property type="project" value="UniProtKB-SubCell"/>
</dbReference>
<dbReference type="GO" id="GO:0005524">
    <property type="term" value="F:ATP binding"/>
    <property type="evidence" value="ECO:0007669"/>
    <property type="project" value="UniProtKB-KW"/>
</dbReference>
<dbReference type="GO" id="GO:0016887">
    <property type="term" value="F:ATP hydrolysis activity"/>
    <property type="evidence" value="ECO:0007669"/>
    <property type="project" value="InterPro"/>
</dbReference>
<dbReference type="GO" id="GO:0034605">
    <property type="term" value="P:cellular response to heat"/>
    <property type="evidence" value="ECO:0007669"/>
    <property type="project" value="TreeGrafter"/>
</dbReference>
<dbReference type="GO" id="GO:0042026">
    <property type="term" value="P:protein refolding"/>
    <property type="evidence" value="ECO:0007669"/>
    <property type="project" value="InterPro"/>
</dbReference>
<dbReference type="CDD" id="cd00009">
    <property type="entry name" value="AAA"/>
    <property type="match status" value="1"/>
</dbReference>
<dbReference type="CDD" id="cd19499">
    <property type="entry name" value="RecA-like_ClpB_Hsp104-like"/>
    <property type="match status" value="1"/>
</dbReference>
<dbReference type="FunFam" id="1.10.1780.10:FF:000003">
    <property type="entry name" value="ATP-dependent chaperone ClpB"/>
    <property type="match status" value="1"/>
</dbReference>
<dbReference type="FunFam" id="1.10.8.60:FF:000017">
    <property type="entry name" value="ATP-dependent chaperone ClpB"/>
    <property type="match status" value="1"/>
</dbReference>
<dbReference type="FunFam" id="3.40.50.300:FF:000120">
    <property type="entry name" value="ATP-dependent chaperone ClpB"/>
    <property type="match status" value="1"/>
</dbReference>
<dbReference type="FunFam" id="3.40.50.300:FF:000025">
    <property type="entry name" value="ATP-dependent Clp protease subunit"/>
    <property type="match status" value="1"/>
</dbReference>
<dbReference type="FunFam" id="3.40.50.300:FF:000010">
    <property type="entry name" value="Chaperone clpB 1, putative"/>
    <property type="match status" value="1"/>
</dbReference>
<dbReference type="Gene3D" id="1.10.8.60">
    <property type="match status" value="1"/>
</dbReference>
<dbReference type="Gene3D" id="1.10.1780.10">
    <property type="entry name" value="Clp, N-terminal domain"/>
    <property type="match status" value="1"/>
</dbReference>
<dbReference type="Gene3D" id="3.40.50.300">
    <property type="entry name" value="P-loop containing nucleotide triphosphate hydrolases"/>
    <property type="match status" value="3"/>
</dbReference>
<dbReference type="InterPro" id="IPR003593">
    <property type="entry name" value="AAA+_ATPase"/>
</dbReference>
<dbReference type="InterPro" id="IPR003959">
    <property type="entry name" value="ATPase_AAA_core"/>
</dbReference>
<dbReference type="InterPro" id="IPR017730">
    <property type="entry name" value="Chaperonin_ClpB"/>
</dbReference>
<dbReference type="InterPro" id="IPR019489">
    <property type="entry name" value="Clp_ATPase_C"/>
</dbReference>
<dbReference type="InterPro" id="IPR036628">
    <property type="entry name" value="Clp_N_dom_sf"/>
</dbReference>
<dbReference type="InterPro" id="IPR004176">
    <property type="entry name" value="Clp_R_dom"/>
</dbReference>
<dbReference type="InterPro" id="IPR001270">
    <property type="entry name" value="ClpA/B"/>
</dbReference>
<dbReference type="InterPro" id="IPR018368">
    <property type="entry name" value="ClpA/B_CS1"/>
</dbReference>
<dbReference type="InterPro" id="IPR028299">
    <property type="entry name" value="ClpA/B_CS2"/>
</dbReference>
<dbReference type="InterPro" id="IPR041546">
    <property type="entry name" value="ClpA/ClpB_AAA_lid"/>
</dbReference>
<dbReference type="InterPro" id="IPR050130">
    <property type="entry name" value="ClpA_ClpB"/>
</dbReference>
<dbReference type="InterPro" id="IPR027417">
    <property type="entry name" value="P-loop_NTPase"/>
</dbReference>
<dbReference type="NCBIfam" id="TIGR03346">
    <property type="entry name" value="chaperone_ClpB"/>
    <property type="match status" value="1"/>
</dbReference>
<dbReference type="PANTHER" id="PTHR11638">
    <property type="entry name" value="ATP-DEPENDENT CLP PROTEASE"/>
    <property type="match status" value="1"/>
</dbReference>
<dbReference type="PANTHER" id="PTHR11638:SF18">
    <property type="entry name" value="HEAT SHOCK PROTEIN 104"/>
    <property type="match status" value="1"/>
</dbReference>
<dbReference type="Pfam" id="PF00004">
    <property type="entry name" value="AAA"/>
    <property type="match status" value="1"/>
</dbReference>
<dbReference type="Pfam" id="PF07724">
    <property type="entry name" value="AAA_2"/>
    <property type="match status" value="1"/>
</dbReference>
<dbReference type="Pfam" id="PF17871">
    <property type="entry name" value="AAA_lid_9"/>
    <property type="match status" value="1"/>
</dbReference>
<dbReference type="Pfam" id="PF02861">
    <property type="entry name" value="Clp_N"/>
    <property type="match status" value="2"/>
</dbReference>
<dbReference type="Pfam" id="PF10431">
    <property type="entry name" value="ClpB_D2-small"/>
    <property type="match status" value="1"/>
</dbReference>
<dbReference type="PRINTS" id="PR00300">
    <property type="entry name" value="CLPPROTEASEA"/>
</dbReference>
<dbReference type="SMART" id="SM00382">
    <property type="entry name" value="AAA"/>
    <property type="match status" value="2"/>
</dbReference>
<dbReference type="SMART" id="SM01086">
    <property type="entry name" value="ClpB_D2-small"/>
    <property type="match status" value="1"/>
</dbReference>
<dbReference type="SUPFAM" id="SSF81923">
    <property type="entry name" value="Double Clp-N motif"/>
    <property type="match status" value="1"/>
</dbReference>
<dbReference type="SUPFAM" id="SSF52540">
    <property type="entry name" value="P-loop containing nucleoside triphosphate hydrolases"/>
    <property type="match status" value="2"/>
</dbReference>
<dbReference type="PROSITE" id="PS51903">
    <property type="entry name" value="CLP_R"/>
    <property type="match status" value="1"/>
</dbReference>
<dbReference type="PROSITE" id="PS00870">
    <property type="entry name" value="CLPAB_1"/>
    <property type="match status" value="1"/>
</dbReference>
<dbReference type="PROSITE" id="PS00871">
    <property type="entry name" value="CLPAB_2"/>
    <property type="match status" value="1"/>
</dbReference>
<keyword id="KW-0067">ATP-binding</keyword>
<keyword id="KW-0143">Chaperone</keyword>
<keyword id="KW-0175">Coiled coil</keyword>
<keyword id="KW-0963">Cytoplasm</keyword>
<keyword id="KW-0547">Nucleotide-binding</keyword>
<keyword id="KW-1185">Reference proteome</keyword>
<keyword id="KW-0677">Repeat</keyword>
<keyword id="KW-0346">Stress response</keyword>
<sequence length="863" mass="96346">MRFDKFTTKFQQALADAQSMALGQDHPYIEPQHLLLALMQQDDGSITSLLQRAGVNAQPLRQALTQSLKLLPKVEGTGGEINVSRDLANLLNLTDKEAQKRGDQYIASEMFLLAALEDKGETGRLLKQYGATRAALEQAVDSVRGGEKVTDAEAEGSREALKKYTLDLTERARSGKLDPVIGRDDEIRRTIQVLQRRTKNNPVLIGEPGVGKTAIVEGLAQRIVNGEVPETLKNKRVLSLDMAALLAGAKYRGEFEERLKAVLKELAQDEGRTIVFIDELHTMVGAGKAEGAMDAGNMLKPALARGELHCVGATTLDEYRKYVEKDAALERRFQKVLVDEPGVEATIAILRGLQEKYELHHGVEITDPAIVAAAELSHRYITDRFLPDKAIDLIDEAAARIRMEQDSKPEVMDKLDRRLIQLKIEREAVRKEKDDASKKRLALLEEEISKLEREYADLDEILKAEKSRAKGSQEIKEELDKLRREEEAARRKGDLQRASELLYGRIPQLEAQLAEQLHHAESAEEAVQPKLFRTQVGAEEIAEVVSRATGIPVSKMMQGEREKLLFMEDKLHERVIGQDEAVRLVSDAIRRSRSGLADPNRPYGSFLFLGPTGVGKTELCKALAGFLFDSEEHLIRVDMSEFMEKHSVARLIGAPPGYVGYEEGGYLTEQVRRKPYSVILLDEVEKAHPDVFNVLLQVLDDGRMTDGQGRTVDFKNTVIVMTSNLGSQMIQQMSGDDYQVIKLAVMGEVKTYFRPEFINRIDEVVVFHALGEAHIKSIARIQLSNLGKRLAQMEMKLVVSEPALTKLAEVGFDPVFGARPLKRAIQAQIENPLAKELLEGHFSAGDTILVEYSNGHMQFTAQR</sequence>
<name>CLPB_NITEU</name>